<keyword id="KW-0028">Amino-acid biosynthesis</keyword>
<keyword id="KW-0032">Aminotransferase</keyword>
<keyword id="KW-0963">Cytoplasm</keyword>
<keyword id="KW-0663">Pyridoxal phosphate</keyword>
<keyword id="KW-0664">Pyridoxine biosynthesis</keyword>
<keyword id="KW-0718">Serine biosynthesis</keyword>
<keyword id="KW-0808">Transferase</keyword>
<sequence length="362" mass="39783">MAQIFNFSSGPAMLPAEVLKQAQQELRDWNGLGTSVMEVSHRGKEFIQVAEEAEKDFRDLLNVPSNYKVLFCHGGGRGQFAAVPLNILGDKTTADYVDAGYWAASAIKEAKKYCTPNVFDAKVTVDGLRAVKPMREWQLSDNAAYMHYCPNETIDGIAIDETPDFGADVVVAADFSSTILSRPIDVSRYGVIYAGAQKNIGPAGLTIVIVREDLLGKANIACPSILDYSILNDNGSMFNTPPTFAWYLSGLVFKWLKANGGVAEMDKINQQKAELLYGVIDNSDFYRNDVAKANRSRMNVPFQLADSALDKLFLEESFAAGLHALKGHRVVGGMRASIYNAMPLEGVKALTDFMVEFERRHG</sequence>
<evidence type="ECO:0000255" key="1">
    <source>
        <dbReference type="HAMAP-Rule" id="MF_00160"/>
    </source>
</evidence>
<dbReference type="EC" id="2.6.1.52" evidence="1"/>
<dbReference type="EMBL" id="CP000948">
    <property type="protein sequence ID" value="ACB02107.1"/>
    <property type="molecule type" value="Genomic_DNA"/>
</dbReference>
<dbReference type="RefSeq" id="WP_000057138.1">
    <property type="nucleotide sequence ID" value="NC_010473.1"/>
</dbReference>
<dbReference type="SMR" id="B1X847"/>
<dbReference type="KEGG" id="ecd:ECDH10B_0977"/>
<dbReference type="HOGENOM" id="CLU_034866_0_2_6"/>
<dbReference type="UniPathway" id="UPA00135">
    <property type="reaction ID" value="UER00197"/>
</dbReference>
<dbReference type="UniPathway" id="UPA00244">
    <property type="reaction ID" value="UER00311"/>
</dbReference>
<dbReference type="GO" id="GO:0005737">
    <property type="term" value="C:cytoplasm"/>
    <property type="evidence" value="ECO:0007669"/>
    <property type="project" value="UniProtKB-SubCell"/>
</dbReference>
<dbReference type="GO" id="GO:0004648">
    <property type="term" value="F:O-phospho-L-serine:2-oxoglutarate aminotransferase activity"/>
    <property type="evidence" value="ECO:0007669"/>
    <property type="project" value="UniProtKB-UniRule"/>
</dbReference>
<dbReference type="GO" id="GO:0030170">
    <property type="term" value="F:pyridoxal phosphate binding"/>
    <property type="evidence" value="ECO:0007669"/>
    <property type="project" value="UniProtKB-UniRule"/>
</dbReference>
<dbReference type="GO" id="GO:0006564">
    <property type="term" value="P:L-serine biosynthetic process"/>
    <property type="evidence" value="ECO:0007669"/>
    <property type="project" value="UniProtKB-UniRule"/>
</dbReference>
<dbReference type="GO" id="GO:0008615">
    <property type="term" value="P:pyridoxine biosynthetic process"/>
    <property type="evidence" value="ECO:0007669"/>
    <property type="project" value="UniProtKB-UniRule"/>
</dbReference>
<dbReference type="CDD" id="cd00611">
    <property type="entry name" value="PSAT_like"/>
    <property type="match status" value="1"/>
</dbReference>
<dbReference type="FunFam" id="3.40.640.10:FF:000010">
    <property type="entry name" value="Phosphoserine aminotransferase"/>
    <property type="match status" value="1"/>
</dbReference>
<dbReference type="FunFam" id="3.90.1150.10:FF:000006">
    <property type="entry name" value="Phosphoserine aminotransferase"/>
    <property type="match status" value="1"/>
</dbReference>
<dbReference type="Gene3D" id="3.90.1150.10">
    <property type="entry name" value="Aspartate Aminotransferase, domain 1"/>
    <property type="match status" value="1"/>
</dbReference>
<dbReference type="Gene3D" id="3.40.640.10">
    <property type="entry name" value="Type I PLP-dependent aspartate aminotransferase-like (Major domain)"/>
    <property type="match status" value="1"/>
</dbReference>
<dbReference type="HAMAP" id="MF_00160">
    <property type="entry name" value="SerC_aminotrans_5"/>
    <property type="match status" value="1"/>
</dbReference>
<dbReference type="InterPro" id="IPR000192">
    <property type="entry name" value="Aminotrans_V_dom"/>
</dbReference>
<dbReference type="InterPro" id="IPR020578">
    <property type="entry name" value="Aminotrans_V_PyrdxlP_BS"/>
</dbReference>
<dbReference type="InterPro" id="IPR022278">
    <property type="entry name" value="Pser_aminoTfrase"/>
</dbReference>
<dbReference type="InterPro" id="IPR015424">
    <property type="entry name" value="PyrdxlP-dep_Trfase"/>
</dbReference>
<dbReference type="InterPro" id="IPR015421">
    <property type="entry name" value="PyrdxlP-dep_Trfase_major"/>
</dbReference>
<dbReference type="InterPro" id="IPR015422">
    <property type="entry name" value="PyrdxlP-dep_Trfase_small"/>
</dbReference>
<dbReference type="NCBIfam" id="NF003764">
    <property type="entry name" value="PRK05355.1"/>
    <property type="match status" value="1"/>
</dbReference>
<dbReference type="NCBIfam" id="TIGR01364">
    <property type="entry name" value="serC_1"/>
    <property type="match status" value="1"/>
</dbReference>
<dbReference type="PANTHER" id="PTHR43247">
    <property type="entry name" value="PHOSPHOSERINE AMINOTRANSFERASE"/>
    <property type="match status" value="1"/>
</dbReference>
<dbReference type="PANTHER" id="PTHR43247:SF1">
    <property type="entry name" value="PHOSPHOSERINE AMINOTRANSFERASE"/>
    <property type="match status" value="1"/>
</dbReference>
<dbReference type="Pfam" id="PF00266">
    <property type="entry name" value="Aminotran_5"/>
    <property type="match status" value="1"/>
</dbReference>
<dbReference type="PIRSF" id="PIRSF000525">
    <property type="entry name" value="SerC"/>
    <property type="match status" value="1"/>
</dbReference>
<dbReference type="SUPFAM" id="SSF53383">
    <property type="entry name" value="PLP-dependent transferases"/>
    <property type="match status" value="1"/>
</dbReference>
<dbReference type="PROSITE" id="PS00595">
    <property type="entry name" value="AA_TRANSFER_CLASS_5"/>
    <property type="match status" value="1"/>
</dbReference>
<name>SERC_ECODH</name>
<accession>B1X847</accession>
<reference key="1">
    <citation type="journal article" date="2008" name="J. Bacteriol.">
        <title>The complete genome sequence of Escherichia coli DH10B: insights into the biology of a laboratory workhorse.</title>
        <authorList>
            <person name="Durfee T."/>
            <person name="Nelson R."/>
            <person name="Baldwin S."/>
            <person name="Plunkett G. III"/>
            <person name="Burland V."/>
            <person name="Mau B."/>
            <person name="Petrosino J.F."/>
            <person name="Qin X."/>
            <person name="Muzny D.M."/>
            <person name="Ayele M."/>
            <person name="Gibbs R.A."/>
            <person name="Csorgo B."/>
            <person name="Posfai G."/>
            <person name="Weinstock G.M."/>
            <person name="Blattner F.R."/>
        </authorList>
    </citation>
    <scope>NUCLEOTIDE SEQUENCE [LARGE SCALE GENOMIC DNA]</scope>
    <source>
        <strain>K12 / DH10B</strain>
    </source>
</reference>
<proteinExistence type="inferred from homology"/>
<comment type="function">
    <text evidence="1">Catalyzes the reversible conversion of 3-phosphohydroxypyruvate to phosphoserine and of 3-hydroxy-2-oxo-4-phosphonooxybutanoate to phosphohydroxythreonine.</text>
</comment>
<comment type="catalytic activity">
    <reaction evidence="1">
        <text>O-phospho-L-serine + 2-oxoglutarate = 3-phosphooxypyruvate + L-glutamate</text>
        <dbReference type="Rhea" id="RHEA:14329"/>
        <dbReference type="ChEBI" id="CHEBI:16810"/>
        <dbReference type="ChEBI" id="CHEBI:18110"/>
        <dbReference type="ChEBI" id="CHEBI:29985"/>
        <dbReference type="ChEBI" id="CHEBI:57524"/>
        <dbReference type="EC" id="2.6.1.52"/>
    </reaction>
</comment>
<comment type="catalytic activity">
    <reaction evidence="1">
        <text>4-(phosphooxy)-L-threonine + 2-oxoglutarate = (R)-3-hydroxy-2-oxo-4-phosphooxybutanoate + L-glutamate</text>
        <dbReference type="Rhea" id="RHEA:16573"/>
        <dbReference type="ChEBI" id="CHEBI:16810"/>
        <dbReference type="ChEBI" id="CHEBI:29985"/>
        <dbReference type="ChEBI" id="CHEBI:58452"/>
        <dbReference type="ChEBI" id="CHEBI:58538"/>
        <dbReference type="EC" id="2.6.1.52"/>
    </reaction>
</comment>
<comment type="cofactor">
    <cofactor evidence="1">
        <name>pyridoxal 5'-phosphate</name>
        <dbReference type="ChEBI" id="CHEBI:597326"/>
    </cofactor>
    <text evidence="1">Binds 1 pyridoxal phosphate per subunit.</text>
</comment>
<comment type="pathway">
    <text evidence="1">Amino-acid biosynthesis; L-serine biosynthesis; L-serine from 3-phospho-D-glycerate: step 2/3.</text>
</comment>
<comment type="pathway">
    <text evidence="1">Cofactor biosynthesis; pyridoxine 5'-phosphate biosynthesis; pyridoxine 5'-phosphate from D-erythrose 4-phosphate: step 3/5.</text>
</comment>
<comment type="subunit">
    <text evidence="1">Homodimer.</text>
</comment>
<comment type="subcellular location">
    <subcellularLocation>
        <location evidence="1">Cytoplasm</location>
    </subcellularLocation>
</comment>
<comment type="similarity">
    <text evidence="1">Belongs to the class-V pyridoxal-phosphate-dependent aminotransferase family. SerC subfamily.</text>
</comment>
<organism>
    <name type="scientific">Escherichia coli (strain K12 / DH10B)</name>
    <dbReference type="NCBI Taxonomy" id="316385"/>
    <lineage>
        <taxon>Bacteria</taxon>
        <taxon>Pseudomonadati</taxon>
        <taxon>Pseudomonadota</taxon>
        <taxon>Gammaproteobacteria</taxon>
        <taxon>Enterobacterales</taxon>
        <taxon>Enterobacteriaceae</taxon>
        <taxon>Escherichia</taxon>
    </lineage>
</organism>
<gene>
    <name evidence="1" type="primary">serC</name>
    <name type="ordered locus">ECDH10B_0977</name>
</gene>
<protein>
    <recommendedName>
        <fullName evidence="1">Phosphoserine aminotransferase</fullName>
        <ecNumber evidence="1">2.6.1.52</ecNumber>
    </recommendedName>
    <alternativeName>
        <fullName evidence="1">Phosphohydroxythreonine aminotransferase</fullName>
        <shortName evidence="1">PSAT</shortName>
    </alternativeName>
</protein>
<feature type="chain" id="PRO_1000203527" description="Phosphoserine aminotransferase">
    <location>
        <begin position="1"/>
        <end position="362"/>
    </location>
</feature>
<feature type="binding site" evidence="1">
    <location>
        <position position="9"/>
    </location>
    <ligand>
        <name>L-glutamate</name>
        <dbReference type="ChEBI" id="CHEBI:29985"/>
    </ligand>
</feature>
<feature type="binding site" evidence="1">
    <location>
        <position position="42"/>
    </location>
    <ligand>
        <name>L-glutamate</name>
        <dbReference type="ChEBI" id="CHEBI:29985"/>
    </ligand>
</feature>
<feature type="binding site" evidence="1">
    <location>
        <begin position="76"/>
        <end position="77"/>
    </location>
    <ligand>
        <name>pyridoxal 5'-phosphate</name>
        <dbReference type="ChEBI" id="CHEBI:597326"/>
    </ligand>
</feature>
<feature type="binding site" evidence="1">
    <location>
        <position position="102"/>
    </location>
    <ligand>
        <name>pyridoxal 5'-phosphate</name>
        <dbReference type="ChEBI" id="CHEBI:597326"/>
    </ligand>
</feature>
<feature type="binding site" evidence="1">
    <location>
        <position position="153"/>
    </location>
    <ligand>
        <name>pyridoxal 5'-phosphate</name>
        <dbReference type="ChEBI" id="CHEBI:597326"/>
    </ligand>
</feature>
<feature type="binding site" evidence="1">
    <location>
        <position position="174"/>
    </location>
    <ligand>
        <name>pyridoxal 5'-phosphate</name>
        <dbReference type="ChEBI" id="CHEBI:597326"/>
    </ligand>
</feature>
<feature type="binding site" evidence="1">
    <location>
        <position position="197"/>
    </location>
    <ligand>
        <name>pyridoxal 5'-phosphate</name>
        <dbReference type="ChEBI" id="CHEBI:597326"/>
    </ligand>
</feature>
<feature type="binding site" evidence="1">
    <location>
        <begin position="239"/>
        <end position="240"/>
    </location>
    <ligand>
        <name>pyridoxal 5'-phosphate</name>
        <dbReference type="ChEBI" id="CHEBI:597326"/>
    </ligand>
</feature>
<feature type="modified residue" description="N6-(pyridoxal phosphate)lysine" evidence="1">
    <location>
        <position position="198"/>
    </location>
</feature>